<protein>
    <recommendedName>
        <fullName>Adult cuticle protein 1</fullName>
    </recommendedName>
    <alternativeName>
        <fullName>dACP-1</fullName>
    </alternativeName>
</protein>
<keyword id="KW-0193">Cuticle</keyword>
<keyword id="KW-1185">Reference proteome</keyword>
<keyword id="KW-0677">Repeat</keyword>
<keyword id="KW-0732">Signal</keyword>
<dbReference type="EMBL" id="S76894">
    <property type="protein sequence ID" value="AAB33567.2"/>
    <property type="molecule type" value="Genomic_DNA"/>
</dbReference>
<dbReference type="EMBL" id="AE014134">
    <property type="protein sequence ID" value="AAF52547.1"/>
    <property type="molecule type" value="Genomic_DNA"/>
</dbReference>
<dbReference type="EMBL" id="AY119158">
    <property type="protein sequence ID" value="AAM51018.1"/>
    <property type="molecule type" value="mRNA"/>
</dbReference>
<dbReference type="RefSeq" id="NP_477115.1">
    <property type="nucleotide sequence ID" value="NM_057767.4"/>
</dbReference>
<dbReference type="BioGRID" id="60191">
    <property type="interactions" value="13"/>
</dbReference>
<dbReference type="IntAct" id="Q26416">
    <property type="interactions" value="38"/>
</dbReference>
<dbReference type="STRING" id="7227.FBpp0079123"/>
<dbReference type="PaxDb" id="7227-FBpp0079123"/>
<dbReference type="DNASU" id="34052"/>
<dbReference type="EnsemblMetazoa" id="FBtr0079500">
    <property type="protein sequence ID" value="FBpp0079123"/>
    <property type="gene ID" value="FBgn0014454"/>
</dbReference>
<dbReference type="GeneID" id="34052"/>
<dbReference type="KEGG" id="dme:Dmel_CG7216"/>
<dbReference type="AGR" id="FB:FBgn0014454"/>
<dbReference type="CTD" id="52"/>
<dbReference type="FlyBase" id="FBgn0014454">
    <property type="gene designation" value="Acp1"/>
</dbReference>
<dbReference type="VEuPathDB" id="VectorBase:FBgn0014454"/>
<dbReference type="eggNOG" id="ENOG502T9P8">
    <property type="taxonomic scope" value="Eukaryota"/>
</dbReference>
<dbReference type="GeneTree" id="ENSGT00940000176369"/>
<dbReference type="HOGENOM" id="CLU_148241_0_0_1"/>
<dbReference type="InParanoid" id="Q26416"/>
<dbReference type="OMA" id="ASPWAHA"/>
<dbReference type="OrthoDB" id="7743350at2759"/>
<dbReference type="PhylomeDB" id="Q26416"/>
<dbReference type="BioGRID-ORCS" id="34052">
    <property type="hits" value="0 hits in 1 CRISPR screen"/>
</dbReference>
<dbReference type="ChiTaRS" id="Acp1">
    <property type="organism name" value="fly"/>
</dbReference>
<dbReference type="GenomeRNAi" id="34052"/>
<dbReference type="PRO" id="PR:Q26416"/>
<dbReference type="Proteomes" id="UP000000803">
    <property type="component" value="Chromosome 2L"/>
</dbReference>
<dbReference type="Bgee" id="FBgn0014454">
    <property type="expression patterns" value="Expressed in fat body cell in male reproductive gland and 25 other cell types or tissues"/>
</dbReference>
<dbReference type="ExpressionAtlas" id="Q26416">
    <property type="expression patterns" value="baseline and differential"/>
</dbReference>
<dbReference type="GO" id="GO:0008012">
    <property type="term" value="F:structural constituent of adult chitin-based cuticle"/>
    <property type="evidence" value="ECO:0000305"/>
    <property type="project" value="FlyBase"/>
</dbReference>
<dbReference type="GO" id="GO:0008365">
    <property type="term" value="P:adult chitin-based cuticle development"/>
    <property type="evidence" value="ECO:0000270"/>
    <property type="project" value="FlyBase"/>
</dbReference>
<dbReference type="InterPro" id="IPR031874">
    <property type="entry name" value="Cuticle_Acp1"/>
</dbReference>
<dbReference type="PANTHER" id="PTHR12336">
    <property type="entry name" value="ADULT CUTICLE PROTEIN 1-RELATED"/>
    <property type="match status" value="1"/>
</dbReference>
<dbReference type="PANTHER" id="PTHR12336:SF0">
    <property type="entry name" value="ADULT CUTICLE PROTEIN 1-RELATED"/>
    <property type="match status" value="1"/>
</dbReference>
<dbReference type="Pfam" id="PF15955">
    <property type="entry name" value="Cuticle_4"/>
    <property type="match status" value="1"/>
</dbReference>
<feature type="signal peptide" evidence="1">
    <location>
        <begin position="1"/>
        <end position="19"/>
    </location>
</feature>
<feature type="chain" id="PRO_0000006402" description="Adult cuticle protein 1">
    <location>
        <begin position="20"/>
        <end position="135"/>
    </location>
</feature>
<feature type="repeat" description="1">
    <location>
        <begin position="72"/>
        <end position="75"/>
    </location>
</feature>
<feature type="repeat" description="2">
    <location>
        <begin position="78"/>
        <end position="81"/>
    </location>
</feature>
<feature type="repeat" description="3">
    <location>
        <begin position="128"/>
        <end position="131"/>
    </location>
</feature>
<sequence>MKFAVAVIFTLALAMGVQSSVIPLLSQVAGHGLSYTAVSGPAVVASPWAVPAAHWPAAVNVASWPPAAIHAAAPAVLAAPAPAVVAAHAPSVVVAPVAHSGVYTAQTRGAIHTAPLAGHIQSVASINAAPAPGTL</sequence>
<comment type="function">
    <text evidence="2">Component of the cuticle of the adult fruit fly. Could be involved in thickening of the hard adult cuticle.</text>
</comment>
<comment type="tissue specificity">
    <text evidence="2">Detected in the epidermis underlying the head and thorax (including legs and wings), but not in the abdominal epidermis of newly eclosed flies.</text>
</comment>
<comment type="developmental stage">
    <text evidence="2">Expression starts around 72 hours after pupariation, peaks 12 hours after eclosion and decreases thereafter to undetectable levels by 3 days after eclosion.</text>
</comment>
<comment type="domain">
    <text>The tetrapeptide (A-A-P-[AV]) repeats found throughout the protein are also present in many proteins constituting the protective envelope of other species.</text>
</comment>
<evidence type="ECO:0000255" key="1"/>
<evidence type="ECO:0000269" key="2">
    <source>
    </source>
</evidence>
<gene>
    <name type="primary">Acp1</name>
    <name type="ORF">CG7216</name>
</gene>
<reference key="1">
    <citation type="journal article" date="1995" name="Dev. Biol.">
        <title>Temporal and spatial expression of an adult cuticle protein gene from Drosophila suggests that its protein product may impart some specialized cuticle function.</title>
        <authorList>
            <person name="Qiu J."/>
            <person name="Hardin P.E."/>
        </authorList>
    </citation>
    <scope>NUCLEOTIDE SEQUENCE [GENOMIC DNA]</scope>
    <scope>FUNCTION</scope>
    <scope>TISSUE SPECIFICITY</scope>
    <scope>DEVELOPMENTAL STAGE</scope>
    <source>
        <strain>Canton-S</strain>
        <tissue>Head</tissue>
    </source>
</reference>
<reference key="2">
    <citation type="journal article" date="2000" name="Science">
        <title>The genome sequence of Drosophila melanogaster.</title>
        <authorList>
            <person name="Adams M.D."/>
            <person name="Celniker S.E."/>
            <person name="Holt R.A."/>
            <person name="Evans C.A."/>
            <person name="Gocayne J.D."/>
            <person name="Amanatides P.G."/>
            <person name="Scherer S.E."/>
            <person name="Li P.W."/>
            <person name="Hoskins R.A."/>
            <person name="Galle R.F."/>
            <person name="George R.A."/>
            <person name="Lewis S.E."/>
            <person name="Richards S."/>
            <person name="Ashburner M."/>
            <person name="Henderson S.N."/>
            <person name="Sutton G.G."/>
            <person name="Wortman J.R."/>
            <person name="Yandell M.D."/>
            <person name="Zhang Q."/>
            <person name="Chen L.X."/>
            <person name="Brandon R.C."/>
            <person name="Rogers Y.-H.C."/>
            <person name="Blazej R.G."/>
            <person name="Champe M."/>
            <person name="Pfeiffer B.D."/>
            <person name="Wan K.H."/>
            <person name="Doyle C."/>
            <person name="Baxter E.G."/>
            <person name="Helt G."/>
            <person name="Nelson C.R."/>
            <person name="Miklos G.L.G."/>
            <person name="Abril J.F."/>
            <person name="Agbayani A."/>
            <person name="An H.-J."/>
            <person name="Andrews-Pfannkoch C."/>
            <person name="Baldwin D."/>
            <person name="Ballew R.M."/>
            <person name="Basu A."/>
            <person name="Baxendale J."/>
            <person name="Bayraktaroglu L."/>
            <person name="Beasley E.M."/>
            <person name="Beeson K.Y."/>
            <person name="Benos P.V."/>
            <person name="Berman B.P."/>
            <person name="Bhandari D."/>
            <person name="Bolshakov S."/>
            <person name="Borkova D."/>
            <person name="Botchan M.R."/>
            <person name="Bouck J."/>
            <person name="Brokstein P."/>
            <person name="Brottier P."/>
            <person name="Burtis K.C."/>
            <person name="Busam D.A."/>
            <person name="Butler H."/>
            <person name="Cadieu E."/>
            <person name="Center A."/>
            <person name="Chandra I."/>
            <person name="Cherry J.M."/>
            <person name="Cawley S."/>
            <person name="Dahlke C."/>
            <person name="Davenport L.B."/>
            <person name="Davies P."/>
            <person name="de Pablos B."/>
            <person name="Delcher A."/>
            <person name="Deng Z."/>
            <person name="Mays A.D."/>
            <person name="Dew I."/>
            <person name="Dietz S.M."/>
            <person name="Dodson K."/>
            <person name="Doup L.E."/>
            <person name="Downes M."/>
            <person name="Dugan-Rocha S."/>
            <person name="Dunkov B.C."/>
            <person name="Dunn P."/>
            <person name="Durbin K.J."/>
            <person name="Evangelista C.C."/>
            <person name="Ferraz C."/>
            <person name="Ferriera S."/>
            <person name="Fleischmann W."/>
            <person name="Fosler C."/>
            <person name="Gabrielian A.E."/>
            <person name="Garg N.S."/>
            <person name="Gelbart W.M."/>
            <person name="Glasser K."/>
            <person name="Glodek A."/>
            <person name="Gong F."/>
            <person name="Gorrell J.H."/>
            <person name="Gu Z."/>
            <person name="Guan P."/>
            <person name="Harris M."/>
            <person name="Harris N.L."/>
            <person name="Harvey D.A."/>
            <person name="Heiman T.J."/>
            <person name="Hernandez J.R."/>
            <person name="Houck J."/>
            <person name="Hostin D."/>
            <person name="Houston K.A."/>
            <person name="Howland T.J."/>
            <person name="Wei M.-H."/>
            <person name="Ibegwam C."/>
            <person name="Jalali M."/>
            <person name="Kalush F."/>
            <person name="Karpen G.H."/>
            <person name="Ke Z."/>
            <person name="Kennison J.A."/>
            <person name="Ketchum K.A."/>
            <person name="Kimmel B.E."/>
            <person name="Kodira C.D."/>
            <person name="Kraft C.L."/>
            <person name="Kravitz S."/>
            <person name="Kulp D."/>
            <person name="Lai Z."/>
            <person name="Lasko P."/>
            <person name="Lei Y."/>
            <person name="Levitsky A.A."/>
            <person name="Li J.H."/>
            <person name="Li Z."/>
            <person name="Liang Y."/>
            <person name="Lin X."/>
            <person name="Liu X."/>
            <person name="Mattei B."/>
            <person name="McIntosh T.C."/>
            <person name="McLeod M.P."/>
            <person name="McPherson D."/>
            <person name="Merkulov G."/>
            <person name="Milshina N.V."/>
            <person name="Mobarry C."/>
            <person name="Morris J."/>
            <person name="Moshrefi A."/>
            <person name="Mount S.M."/>
            <person name="Moy M."/>
            <person name="Murphy B."/>
            <person name="Murphy L."/>
            <person name="Muzny D.M."/>
            <person name="Nelson D.L."/>
            <person name="Nelson D.R."/>
            <person name="Nelson K.A."/>
            <person name="Nixon K."/>
            <person name="Nusskern D.R."/>
            <person name="Pacleb J.M."/>
            <person name="Palazzolo M."/>
            <person name="Pittman G.S."/>
            <person name="Pan S."/>
            <person name="Pollard J."/>
            <person name="Puri V."/>
            <person name="Reese M.G."/>
            <person name="Reinert K."/>
            <person name="Remington K."/>
            <person name="Saunders R.D.C."/>
            <person name="Scheeler F."/>
            <person name="Shen H."/>
            <person name="Shue B.C."/>
            <person name="Siden-Kiamos I."/>
            <person name="Simpson M."/>
            <person name="Skupski M.P."/>
            <person name="Smith T.J."/>
            <person name="Spier E."/>
            <person name="Spradling A.C."/>
            <person name="Stapleton M."/>
            <person name="Strong R."/>
            <person name="Sun E."/>
            <person name="Svirskas R."/>
            <person name="Tector C."/>
            <person name="Turner R."/>
            <person name="Venter E."/>
            <person name="Wang A.H."/>
            <person name="Wang X."/>
            <person name="Wang Z.-Y."/>
            <person name="Wassarman D.A."/>
            <person name="Weinstock G.M."/>
            <person name="Weissenbach J."/>
            <person name="Williams S.M."/>
            <person name="Woodage T."/>
            <person name="Worley K.C."/>
            <person name="Wu D."/>
            <person name="Yang S."/>
            <person name="Yao Q.A."/>
            <person name="Ye J."/>
            <person name="Yeh R.-F."/>
            <person name="Zaveri J.S."/>
            <person name="Zhan M."/>
            <person name="Zhang G."/>
            <person name="Zhao Q."/>
            <person name="Zheng L."/>
            <person name="Zheng X.H."/>
            <person name="Zhong F.N."/>
            <person name="Zhong W."/>
            <person name="Zhou X."/>
            <person name="Zhu S.C."/>
            <person name="Zhu X."/>
            <person name="Smith H.O."/>
            <person name="Gibbs R.A."/>
            <person name="Myers E.W."/>
            <person name="Rubin G.M."/>
            <person name="Venter J.C."/>
        </authorList>
    </citation>
    <scope>NUCLEOTIDE SEQUENCE [LARGE SCALE GENOMIC DNA]</scope>
    <source>
        <strain>Berkeley</strain>
    </source>
</reference>
<reference key="3">
    <citation type="journal article" date="2002" name="Genome Biol.">
        <title>Annotation of the Drosophila melanogaster euchromatic genome: a systematic review.</title>
        <authorList>
            <person name="Misra S."/>
            <person name="Crosby M.A."/>
            <person name="Mungall C.J."/>
            <person name="Matthews B.B."/>
            <person name="Campbell K.S."/>
            <person name="Hradecky P."/>
            <person name="Huang Y."/>
            <person name="Kaminker J.S."/>
            <person name="Millburn G.H."/>
            <person name="Prochnik S.E."/>
            <person name="Smith C.D."/>
            <person name="Tupy J.L."/>
            <person name="Whitfield E.J."/>
            <person name="Bayraktaroglu L."/>
            <person name="Berman B.P."/>
            <person name="Bettencourt B.R."/>
            <person name="Celniker S.E."/>
            <person name="de Grey A.D.N.J."/>
            <person name="Drysdale R.A."/>
            <person name="Harris N.L."/>
            <person name="Richter J."/>
            <person name="Russo S."/>
            <person name="Schroeder A.J."/>
            <person name="Shu S.Q."/>
            <person name="Stapleton M."/>
            <person name="Yamada C."/>
            <person name="Ashburner M."/>
            <person name="Gelbart W.M."/>
            <person name="Rubin G.M."/>
            <person name="Lewis S.E."/>
        </authorList>
    </citation>
    <scope>GENOME REANNOTATION</scope>
    <source>
        <strain>Berkeley</strain>
    </source>
</reference>
<reference key="4">
    <citation type="journal article" date="2002" name="Genome Biol.">
        <title>A Drosophila full-length cDNA resource.</title>
        <authorList>
            <person name="Stapleton M."/>
            <person name="Carlson J.W."/>
            <person name="Brokstein P."/>
            <person name="Yu C."/>
            <person name="Champe M."/>
            <person name="George R.A."/>
            <person name="Guarin H."/>
            <person name="Kronmiller B."/>
            <person name="Pacleb J.M."/>
            <person name="Park S."/>
            <person name="Wan K.H."/>
            <person name="Rubin G.M."/>
            <person name="Celniker S.E."/>
        </authorList>
    </citation>
    <scope>NUCLEOTIDE SEQUENCE [LARGE SCALE MRNA]</scope>
    <source>
        <strain>Berkeley</strain>
        <tissue>Head</tissue>
    </source>
</reference>
<accession>Q26416</accession>
<accession>Q9VLY2</accession>
<name>CUA1_DROME</name>
<proteinExistence type="evidence at transcript level"/>
<organism>
    <name type="scientific">Drosophila melanogaster</name>
    <name type="common">Fruit fly</name>
    <dbReference type="NCBI Taxonomy" id="7227"/>
    <lineage>
        <taxon>Eukaryota</taxon>
        <taxon>Metazoa</taxon>
        <taxon>Ecdysozoa</taxon>
        <taxon>Arthropoda</taxon>
        <taxon>Hexapoda</taxon>
        <taxon>Insecta</taxon>
        <taxon>Pterygota</taxon>
        <taxon>Neoptera</taxon>
        <taxon>Endopterygota</taxon>
        <taxon>Diptera</taxon>
        <taxon>Brachycera</taxon>
        <taxon>Muscomorpha</taxon>
        <taxon>Ephydroidea</taxon>
        <taxon>Drosophilidae</taxon>
        <taxon>Drosophila</taxon>
        <taxon>Sophophora</taxon>
    </lineage>
</organism>